<accession>A0RPB3</accession>
<dbReference type="EMBL" id="CP000487">
    <property type="protein sequence ID" value="ABK83001.1"/>
    <property type="molecule type" value="Genomic_DNA"/>
</dbReference>
<dbReference type="RefSeq" id="WP_002849372.1">
    <property type="nucleotide sequence ID" value="NC_008599.1"/>
</dbReference>
<dbReference type="SMR" id="A0RPB3"/>
<dbReference type="KEGG" id="cff:CFF8240_0871"/>
<dbReference type="eggNOG" id="COG0556">
    <property type="taxonomic scope" value="Bacteria"/>
</dbReference>
<dbReference type="HOGENOM" id="CLU_009621_2_1_7"/>
<dbReference type="Proteomes" id="UP000000760">
    <property type="component" value="Chromosome"/>
</dbReference>
<dbReference type="GO" id="GO:0005737">
    <property type="term" value="C:cytoplasm"/>
    <property type="evidence" value="ECO:0007669"/>
    <property type="project" value="UniProtKB-SubCell"/>
</dbReference>
<dbReference type="GO" id="GO:0009380">
    <property type="term" value="C:excinuclease repair complex"/>
    <property type="evidence" value="ECO:0007669"/>
    <property type="project" value="InterPro"/>
</dbReference>
<dbReference type="GO" id="GO:0005524">
    <property type="term" value="F:ATP binding"/>
    <property type="evidence" value="ECO:0007669"/>
    <property type="project" value="UniProtKB-UniRule"/>
</dbReference>
<dbReference type="GO" id="GO:0016887">
    <property type="term" value="F:ATP hydrolysis activity"/>
    <property type="evidence" value="ECO:0007669"/>
    <property type="project" value="InterPro"/>
</dbReference>
<dbReference type="GO" id="GO:0003677">
    <property type="term" value="F:DNA binding"/>
    <property type="evidence" value="ECO:0007669"/>
    <property type="project" value="UniProtKB-UniRule"/>
</dbReference>
<dbReference type="GO" id="GO:0009381">
    <property type="term" value="F:excinuclease ABC activity"/>
    <property type="evidence" value="ECO:0007669"/>
    <property type="project" value="UniProtKB-UniRule"/>
</dbReference>
<dbReference type="GO" id="GO:0004386">
    <property type="term" value="F:helicase activity"/>
    <property type="evidence" value="ECO:0007669"/>
    <property type="project" value="UniProtKB-KW"/>
</dbReference>
<dbReference type="GO" id="GO:0006289">
    <property type="term" value="P:nucleotide-excision repair"/>
    <property type="evidence" value="ECO:0007669"/>
    <property type="project" value="UniProtKB-UniRule"/>
</dbReference>
<dbReference type="GO" id="GO:0009432">
    <property type="term" value="P:SOS response"/>
    <property type="evidence" value="ECO:0007669"/>
    <property type="project" value="UniProtKB-UniRule"/>
</dbReference>
<dbReference type="CDD" id="cd17916">
    <property type="entry name" value="DEXHc_UvrB"/>
    <property type="match status" value="1"/>
</dbReference>
<dbReference type="CDD" id="cd18790">
    <property type="entry name" value="SF2_C_UvrB"/>
    <property type="match status" value="1"/>
</dbReference>
<dbReference type="Gene3D" id="3.40.50.300">
    <property type="entry name" value="P-loop containing nucleotide triphosphate hydrolases"/>
    <property type="match status" value="3"/>
</dbReference>
<dbReference type="Gene3D" id="4.10.860.10">
    <property type="entry name" value="UVR domain"/>
    <property type="match status" value="1"/>
</dbReference>
<dbReference type="HAMAP" id="MF_00204">
    <property type="entry name" value="UvrB"/>
    <property type="match status" value="1"/>
</dbReference>
<dbReference type="InterPro" id="IPR006935">
    <property type="entry name" value="Helicase/UvrB_N"/>
</dbReference>
<dbReference type="InterPro" id="IPR014001">
    <property type="entry name" value="Helicase_ATP-bd"/>
</dbReference>
<dbReference type="InterPro" id="IPR001650">
    <property type="entry name" value="Helicase_C-like"/>
</dbReference>
<dbReference type="InterPro" id="IPR027417">
    <property type="entry name" value="P-loop_NTPase"/>
</dbReference>
<dbReference type="InterPro" id="IPR001943">
    <property type="entry name" value="UVR_dom"/>
</dbReference>
<dbReference type="InterPro" id="IPR036876">
    <property type="entry name" value="UVR_dom_sf"/>
</dbReference>
<dbReference type="InterPro" id="IPR004807">
    <property type="entry name" value="UvrB"/>
</dbReference>
<dbReference type="InterPro" id="IPR041471">
    <property type="entry name" value="UvrB_inter"/>
</dbReference>
<dbReference type="InterPro" id="IPR024759">
    <property type="entry name" value="UvrB_YAD/RRR_dom"/>
</dbReference>
<dbReference type="NCBIfam" id="NF003673">
    <property type="entry name" value="PRK05298.1"/>
    <property type="match status" value="1"/>
</dbReference>
<dbReference type="NCBIfam" id="TIGR00631">
    <property type="entry name" value="uvrb"/>
    <property type="match status" value="1"/>
</dbReference>
<dbReference type="PANTHER" id="PTHR24029">
    <property type="entry name" value="UVRABC SYSTEM PROTEIN B"/>
    <property type="match status" value="1"/>
</dbReference>
<dbReference type="PANTHER" id="PTHR24029:SF0">
    <property type="entry name" value="UVRABC SYSTEM PROTEIN B"/>
    <property type="match status" value="1"/>
</dbReference>
<dbReference type="Pfam" id="PF00271">
    <property type="entry name" value="Helicase_C"/>
    <property type="match status" value="1"/>
</dbReference>
<dbReference type="Pfam" id="PF04851">
    <property type="entry name" value="ResIII"/>
    <property type="match status" value="1"/>
</dbReference>
<dbReference type="Pfam" id="PF02151">
    <property type="entry name" value="UVR"/>
    <property type="match status" value="1"/>
</dbReference>
<dbReference type="Pfam" id="PF12344">
    <property type="entry name" value="UvrB"/>
    <property type="match status" value="1"/>
</dbReference>
<dbReference type="Pfam" id="PF17757">
    <property type="entry name" value="UvrB_inter"/>
    <property type="match status" value="1"/>
</dbReference>
<dbReference type="SMART" id="SM00487">
    <property type="entry name" value="DEXDc"/>
    <property type="match status" value="1"/>
</dbReference>
<dbReference type="SMART" id="SM00490">
    <property type="entry name" value="HELICc"/>
    <property type="match status" value="1"/>
</dbReference>
<dbReference type="SUPFAM" id="SSF46600">
    <property type="entry name" value="C-terminal UvrC-binding domain of UvrB"/>
    <property type="match status" value="1"/>
</dbReference>
<dbReference type="SUPFAM" id="SSF52540">
    <property type="entry name" value="P-loop containing nucleoside triphosphate hydrolases"/>
    <property type="match status" value="2"/>
</dbReference>
<dbReference type="PROSITE" id="PS51192">
    <property type="entry name" value="HELICASE_ATP_BIND_1"/>
    <property type="match status" value="1"/>
</dbReference>
<dbReference type="PROSITE" id="PS51194">
    <property type="entry name" value="HELICASE_CTER"/>
    <property type="match status" value="1"/>
</dbReference>
<dbReference type="PROSITE" id="PS50151">
    <property type="entry name" value="UVR"/>
    <property type="match status" value="1"/>
</dbReference>
<comment type="function">
    <text evidence="1">The UvrABC repair system catalyzes the recognition and processing of DNA lesions. A damage recognition complex composed of 2 UvrA and 2 UvrB subunits scans DNA for abnormalities. Upon binding of the UvrA(2)B(2) complex to a putative damaged site, the DNA wraps around one UvrB monomer. DNA wrap is dependent on ATP binding by UvrB and probably causes local melting of the DNA helix, facilitating insertion of UvrB beta-hairpin between the DNA strands. Then UvrB probes one DNA strand for the presence of a lesion. If a lesion is found the UvrA subunits dissociate and the UvrB-DNA preincision complex is formed. This complex is subsequently bound by UvrC and the second UvrB is released. If no lesion is found, the DNA wraps around the other UvrB subunit that will check the other stand for damage.</text>
</comment>
<comment type="subunit">
    <text evidence="1">Forms a heterotetramer with UvrA during the search for lesions. Interacts with UvrC in an incision complex.</text>
</comment>
<comment type="subcellular location">
    <subcellularLocation>
        <location evidence="1">Cytoplasm</location>
    </subcellularLocation>
</comment>
<comment type="domain">
    <text evidence="1">The beta-hairpin motif is involved in DNA binding.</text>
</comment>
<comment type="similarity">
    <text evidence="1">Belongs to the UvrB family.</text>
</comment>
<organism>
    <name type="scientific">Campylobacter fetus subsp. fetus (strain 82-40)</name>
    <dbReference type="NCBI Taxonomy" id="360106"/>
    <lineage>
        <taxon>Bacteria</taxon>
        <taxon>Pseudomonadati</taxon>
        <taxon>Campylobacterota</taxon>
        <taxon>Epsilonproteobacteria</taxon>
        <taxon>Campylobacterales</taxon>
        <taxon>Campylobacteraceae</taxon>
        <taxon>Campylobacter</taxon>
    </lineage>
</organism>
<keyword id="KW-0067">ATP-binding</keyword>
<keyword id="KW-0963">Cytoplasm</keyword>
<keyword id="KW-0227">DNA damage</keyword>
<keyword id="KW-0228">DNA excision</keyword>
<keyword id="KW-0234">DNA repair</keyword>
<keyword id="KW-0267">Excision nuclease</keyword>
<keyword id="KW-0347">Helicase</keyword>
<keyword id="KW-0378">Hydrolase</keyword>
<keyword id="KW-0547">Nucleotide-binding</keyword>
<keyword id="KW-0742">SOS response</keyword>
<reference key="1">
    <citation type="submission" date="2006-11" db="EMBL/GenBank/DDBJ databases">
        <title>Sequence of Campylobacter fetus subsp. fetus 82-40.</title>
        <authorList>
            <person name="Fouts D.E."/>
            <person name="Nelson K.E."/>
        </authorList>
    </citation>
    <scope>NUCLEOTIDE SEQUENCE [LARGE SCALE GENOMIC DNA]</scope>
    <source>
        <strain>82-40</strain>
    </source>
</reference>
<protein>
    <recommendedName>
        <fullName evidence="1">UvrABC system protein B</fullName>
        <shortName evidence="1">Protein UvrB</shortName>
    </recommendedName>
    <alternativeName>
        <fullName evidence="1">Excinuclease ABC subunit B</fullName>
    </alternativeName>
</protein>
<name>UVRB_CAMFF</name>
<gene>
    <name evidence="1" type="primary">uvrB</name>
    <name type="ordered locus">CFF8240_0871</name>
</gene>
<proteinExistence type="inferred from homology"/>
<sequence length="658" mass="75496">MDKFEISSKFKPSDDQEKAVTNIVDSIRSGNKFNVLLGVTGSGKTFTMANVIKRLNMPTLIMTHNKSLAAQLYSEFKGFFPKNHVEYFISYYDYYQPEAYIPRQDLFIEKDSSINEELERLRLSATANLLEFDDVVVVASVSANYGLGNPAEYKGMVLLLSLGMSLNQKELLLKLVDMGYKRNDAYFDRGDFRVNGDVVDIYPAYFNDEAIRLEFFGDELDAMYHFDVLENKRTKDVSKFILYATSQFIVGENRLKQAIKDIELELEDRLAFYEKENRLVEYQRLKQRVEFDLEMLSSTGSTKGVENYARYLTGQKAGETPYSLFDYFEVSGKDYLVIVDESHVSLPQFRGMYAGDRSRKEVLVEYGFRLPSALDNRPLKLDEFIAKKANYLFVSATPNQYEIDLSQGHVYEQILRPTGLLDPRIEVISSDNQVEVLFDRAKAVIARGERVLVTTLTKKMSEELTRYYQELGIKVKYMHSDIDAVERNELIRGLRKGEFDMLVGINLLREGLDLPEVSLVAVLDADKEGFLRSRTSLIQTMGRAARNVNGTVILFANKITNSMKEAIDTTEARRKYQGDYNKKYGITPRSASRNLEDSLKEEDLPNLYNKAKKLEKMPASERAKIVKELRKQMLEAAKNLEFEKAAALRDEIAKLREL</sequence>
<evidence type="ECO:0000255" key="1">
    <source>
        <dbReference type="HAMAP-Rule" id="MF_00204"/>
    </source>
</evidence>
<feature type="chain" id="PRO_1000077871" description="UvrABC system protein B">
    <location>
        <begin position="1"/>
        <end position="658"/>
    </location>
</feature>
<feature type="domain" description="Helicase ATP-binding" evidence="1">
    <location>
        <begin position="25"/>
        <end position="182"/>
    </location>
</feature>
<feature type="domain" description="Helicase C-terminal" evidence="1">
    <location>
        <begin position="433"/>
        <end position="596"/>
    </location>
</feature>
<feature type="domain" description="UVR" evidence="1">
    <location>
        <begin position="623"/>
        <end position="658"/>
    </location>
</feature>
<feature type="short sequence motif" description="Beta-hairpin">
    <location>
        <begin position="91"/>
        <end position="114"/>
    </location>
</feature>
<feature type="binding site" evidence="1">
    <location>
        <begin position="38"/>
        <end position="45"/>
    </location>
    <ligand>
        <name>ATP</name>
        <dbReference type="ChEBI" id="CHEBI:30616"/>
    </ligand>
</feature>